<keyword id="KW-0963">Cytoplasm</keyword>
<keyword id="KW-0227">DNA damage</keyword>
<keyword id="KW-0233">DNA recombination</keyword>
<keyword id="KW-0234">DNA repair</keyword>
<keyword id="KW-0238">DNA-binding</keyword>
<keyword id="KW-1185">Reference proteome</keyword>
<protein>
    <recommendedName>
        <fullName evidence="1">Holliday junction branch migration complex subunit RuvA</fullName>
    </recommendedName>
</protein>
<organism>
    <name type="scientific">Prochlorococcus marinus (strain MIT 9301)</name>
    <dbReference type="NCBI Taxonomy" id="167546"/>
    <lineage>
        <taxon>Bacteria</taxon>
        <taxon>Bacillati</taxon>
        <taxon>Cyanobacteriota</taxon>
        <taxon>Cyanophyceae</taxon>
        <taxon>Synechococcales</taxon>
        <taxon>Prochlorococcaceae</taxon>
        <taxon>Prochlorococcus</taxon>
    </lineage>
</organism>
<sequence length="225" mass="25927">MISWINGDLVDLWQTNQKFFVLINCQGLGYEIQILESFFLKLRKNQISTKNITLWVKHIKKEDSDLLFGFTSNEQKNFFIEILSIRGVGSQIGIGILNKFSISEVINAIKTQDKKLICSVPGIGQKMSERLILELKSKFKSEILSEEEKSKGELEIKDPEINKMIEDLQLTLQSLSYKNKEINNILPIIIKEIDLLGKKENNLSFEKLLKLAMRYLDEDSSNIAR</sequence>
<dbReference type="EMBL" id="CP000576">
    <property type="protein sequence ID" value="ABO17539.1"/>
    <property type="molecule type" value="Genomic_DNA"/>
</dbReference>
<dbReference type="RefSeq" id="WP_011862887.1">
    <property type="nucleotide sequence ID" value="NC_009091.1"/>
</dbReference>
<dbReference type="SMR" id="A3PCR4"/>
<dbReference type="STRING" id="167546.P9301_09161"/>
<dbReference type="KEGG" id="pmg:P9301_09161"/>
<dbReference type="eggNOG" id="COG0632">
    <property type="taxonomic scope" value="Bacteria"/>
</dbReference>
<dbReference type="HOGENOM" id="CLU_087936_0_0_3"/>
<dbReference type="OrthoDB" id="5293449at2"/>
<dbReference type="Proteomes" id="UP000001430">
    <property type="component" value="Chromosome"/>
</dbReference>
<dbReference type="GO" id="GO:0005737">
    <property type="term" value="C:cytoplasm"/>
    <property type="evidence" value="ECO:0007669"/>
    <property type="project" value="UniProtKB-SubCell"/>
</dbReference>
<dbReference type="GO" id="GO:0048476">
    <property type="term" value="C:Holliday junction resolvase complex"/>
    <property type="evidence" value="ECO:0007669"/>
    <property type="project" value="UniProtKB-UniRule"/>
</dbReference>
<dbReference type="GO" id="GO:0005524">
    <property type="term" value="F:ATP binding"/>
    <property type="evidence" value="ECO:0007669"/>
    <property type="project" value="InterPro"/>
</dbReference>
<dbReference type="GO" id="GO:0000400">
    <property type="term" value="F:four-way junction DNA binding"/>
    <property type="evidence" value="ECO:0007669"/>
    <property type="project" value="UniProtKB-UniRule"/>
</dbReference>
<dbReference type="GO" id="GO:0009378">
    <property type="term" value="F:four-way junction helicase activity"/>
    <property type="evidence" value="ECO:0007669"/>
    <property type="project" value="InterPro"/>
</dbReference>
<dbReference type="GO" id="GO:0006310">
    <property type="term" value="P:DNA recombination"/>
    <property type="evidence" value="ECO:0007669"/>
    <property type="project" value="UniProtKB-UniRule"/>
</dbReference>
<dbReference type="GO" id="GO:0006281">
    <property type="term" value="P:DNA repair"/>
    <property type="evidence" value="ECO:0007669"/>
    <property type="project" value="UniProtKB-UniRule"/>
</dbReference>
<dbReference type="Gene3D" id="1.10.150.20">
    <property type="entry name" value="5' to 3' exonuclease, C-terminal subdomain"/>
    <property type="match status" value="1"/>
</dbReference>
<dbReference type="Gene3D" id="2.40.50.140">
    <property type="entry name" value="Nucleic acid-binding proteins"/>
    <property type="match status" value="1"/>
</dbReference>
<dbReference type="HAMAP" id="MF_00031">
    <property type="entry name" value="DNA_HJ_migration_RuvA"/>
    <property type="match status" value="1"/>
</dbReference>
<dbReference type="InterPro" id="IPR013849">
    <property type="entry name" value="DNA_helicase_Holl-junc_RuvA_I"/>
</dbReference>
<dbReference type="InterPro" id="IPR012340">
    <property type="entry name" value="NA-bd_OB-fold"/>
</dbReference>
<dbReference type="InterPro" id="IPR000085">
    <property type="entry name" value="RuvA"/>
</dbReference>
<dbReference type="InterPro" id="IPR010994">
    <property type="entry name" value="RuvA_2-like"/>
</dbReference>
<dbReference type="NCBIfam" id="TIGR00084">
    <property type="entry name" value="ruvA"/>
    <property type="match status" value="1"/>
</dbReference>
<dbReference type="Pfam" id="PF14520">
    <property type="entry name" value="HHH_5"/>
    <property type="match status" value="1"/>
</dbReference>
<dbReference type="Pfam" id="PF01330">
    <property type="entry name" value="RuvA_N"/>
    <property type="match status" value="1"/>
</dbReference>
<dbReference type="SUPFAM" id="SSF50249">
    <property type="entry name" value="Nucleic acid-binding proteins"/>
    <property type="match status" value="1"/>
</dbReference>
<dbReference type="SUPFAM" id="SSF47781">
    <property type="entry name" value="RuvA domain 2-like"/>
    <property type="match status" value="1"/>
</dbReference>
<gene>
    <name evidence="1" type="primary">ruvA</name>
    <name type="ordered locus">P9301_09161</name>
</gene>
<proteinExistence type="inferred from homology"/>
<reference key="1">
    <citation type="journal article" date="2007" name="PLoS Genet.">
        <title>Patterns and implications of gene gain and loss in the evolution of Prochlorococcus.</title>
        <authorList>
            <person name="Kettler G.C."/>
            <person name="Martiny A.C."/>
            <person name="Huang K."/>
            <person name="Zucker J."/>
            <person name="Coleman M.L."/>
            <person name="Rodrigue S."/>
            <person name="Chen F."/>
            <person name="Lapidus A."/>
            <person name="Ferriera S."/>
            <person name="Johnson J."/>
            <person name="Steglich C."/>
            <person name="Church G.M."/>
            <person name="Richardson P."/>
            <person name="Chisholm S.W."/>
        </authorList>
    </citation>
    <scope>NUCLEOTIDE SEQUENCE [LARGE SCALE GENOMIC DNA]</scope>
    <source>
        <strain>MIT 9301</strain>
    </source>
</reference>
<evidence type="ECO:0000255" key="1">
    <source>
        <dbReference type="HAMAP-Rule" id="MF_00031"/>
    </source>
</evidence>
<comment type="function">
    <text evidence="1">The RuvA-RuvB-RuvC complex processes Holliday junction (HJ) DNA during genetic recombination and DNA repair, while the RuvA-RuvB complex plays an important role in the rescue of blocked DNA replication forks via replication fork reversal (RFR). RuvA specifically binds to HJ cruciform DNA, conferring on it an open structure. The RuvB hexamer acts as an ATP-dependent pump, pulling dsDNA into and through the RuvAB complex. HJ branch migration allows RuvC to scan DNA until it finds its consensus sequence, where it cleaves and resolves the cruciform DNA.</text>
</comment>
<comment type="subunit">
    <text evidence="1">Homotetramer. Forms an RuvA(8)-RuvB(12)-Holliday junction (HJ) complex. HJ DNA is sandwiched between 2 RuvA tetramers; dsDNA enters through RuvA and exits via RuvB. An RuvB hexamer assembles on each DNA strand where it exits the tetramer. Each RuvB hexamer is contacted by two RuvA subunits (via domain III) on 2 adjacent RuvB subunits; this complex drives branch migration. In the full resolvosome a probable DNA-RuvA(4)-RuvB(12)-RuvC(2) complex forms which resolves the HJ.</text>
</comment>
<comment type="subcellular location">
    <subcellularLocation>
        <location evidence="1">Cytoplasm</location>
    </subcellularLocation>
</comment>
<comment type="domain">
    <text evidence="1">Has three domains with a flexible linker between the domains II and III and assumes an 'L' shape. Domain III is highly mobile and contacts RuvB.</text>
</comment>
<comment type="similarity">
    <text evidence="1">Belongs to the RuvA family.</text>
</comment>
<feature type="chain" id="PRO_1000002512" description="Holliday junction branch migration complex subunit RuvA">
    <location>
        <begin position="1"/>
        <end position="225"/>
    </location>
</feature>
<feature type="region of interest" description="Domain I" evidence="1">
    <location>
        <begin position="1"/>
        <end position="71"/>
    </location>
</feature>
<feature type="region of interest" description="Domain II" evidence="1">
    <location>
        <begin position="72"/>
        <end position="150"/>
    </location>
</feature>
<feature type="region of interest" description="Flexible linker" evidence="1">
    <location>
        <begin position="151"/>
        <end position="161"/>
    </location>
</feature>
<feature type="region of interest" description="Domain III" evidence="1">
    <location>
        <begin position="161"/>
        <end position="225"/>
    </location>
</feature>
<accession>A3PCR4</accession>
<name>RUVA_PROM0</name>